<feature type="signal peptide" evidence="1">
    <location>
        <begin position="1"/>
        <end position="23"/>
    </location>
</feature>
<feature type="chain" id="PRO_1000134824" description="Flagellar L-ring protein">
    <location>
        <begin position="24"/>
        <end position="229"/>
    </location>
</feature>
<feature type="lipid moiety-binding region" description="N-palmitoyl cysteine" evidence="1">
    <location>
        <position position="24"/>
    </location>
</feature>
<feature type="lipid moiety-binding region" description="S-diacylglycerol cysteine" evidence="1">
    <location>
        <position position="24"/>
    </location>
</feature>
<accession>B8JD92</accession>
<comment type="function">
    <text evidence="1">Assembles around the rod to form the L-ring and probably protects the motor/basal body from shearing forces during rotation.</text>
</comment>
<comment type="subunit">
    <text evidence="1">The basal body constitutes a major portion of the flagellar organelle and consists of four rings (L,P,S, and M) mounted on a central rod.</text>
</comment>
<comment type="subcellular location">
    <subcellularLocation>
        <location evidence="1">Cell outer membrane</location>
        <topology evidence="1">Lipid-anchor</topology>
    </subcellularLocation>
    <subcellularLocation>
        <location evidence="1">Bacterial flagellum basal body</location>
    </subcellularLocation>
</comment>
<comment type="similarity">
    <text evidence="1">Belongs to the FlgH family.</text>
</comment>
<proteinExistence type="inferred from homology"/>
<keyword id="KW-0975">Bacterial flagellum</keyword>
<keyword id="KW-0998">Cell outer membrane</keyword>
<keyword id="KW-0449">Lipoprotein</keyword>
<keyword id="KW-0472">Membrane</keyword>
<keyword id="KW-0564">Palmitate</keyword>
<keyword id="KW-0732">Signal</keyword>
<reference key="1">
    <citation type="submission" date="2009-01" db="EMBL/GenBank/DDBJ databases">
        <title>Complete sequence of Anaeromyxobacter dehalogenans 2CP-1.</title>
        <authorList>
            <person name="Lucas S."/>
            <person name="Copeland A."/>
            <person name="Lapidus A."/>
            <person name="Glavina del Rio T."/>
            <person name="Dalin E."/>
            <person name="Tice H."/>
            <person name="Bruce D."/>
            <person name="Goodwin L."/>
            <person name="Pitluck S."/>
            <person name="Saunders E."/>
            <person name="Brettin T."/>
            <person name="Detter J.C."/>
            <person name="Han C."/>
            <person name="Larimer F."/>
            <person name="Land M."/>
            <person name="Hauser L."/>
            <person name="Kyrpides N."/>
            <person name="Ovchinnikova G."/>
            <person name="Beliaev A.S."/>
            <person name="Richardson P."/>
        </authorList>
    </citation>
    <scope>NUCLEOTIDE SEQUENCE [LARGE SCALE GENOMIC DNA]</scope>
    <source>
        <strain>2CP-1 / ATCC BAA-258</strain>
    </source>
</reference>
<dbReference type="EMBL" id="CP001359">
    <property type="protein sequence ID" value="ACL65941.1"/>
    <property type="molecule type" value="Genomic_DNA"/>
</dbReference>
<dbReference type="RefSeq" id="WP_012633726.1">
    <property type="nucleotide sequence ID" value="NC_011891.1"/>
</dbReference>
<dbReference type="SMR" id="B8JD92"/>
<dbReference type="KEGG" id="acp:A2cp1_2604"/>
<dbReference type="HOGENOM" id="CLU_069313_1_1_7"/>
<dbReference type="Proteomes" id="UP000007089">
    <property type="component" value="Chromosome"/>
</dbReference>
<dbReference type="GO" id="GO:0009427">
    <property type="term" value="C:bacterial-type flagellum basal body, distal rod, L ring"/>
    <property type="evidence" value="ECO:0007669"/>
    <property type="project" value="InterPro"/>
</dbReference>
<dbReference type="GO" id="GO:0009279">
    <property type="term" value="C:cell outer membrane"/>
    <property type="evidence" value="ECO:0007669"/>
    <property type="project" value="UniProtKB-SubCell"/>
</dbReference>
<dbReference type="GO" id="GO:0003774">
    <property type="term" value="F:cytoskeletal motor activity"/>
    <property type="evidence" value="ECO:0007669"/>
    <property type="project" value="InterPro"/>
</dbReference>
<dbReference type="GO" id="GO:0071973">
    <property type="term" value="P:bacterial-type flagellum-dependent cell motility"/>
    <property type="evidence" value="ECO:0007669"/>
    <property type="project" value="InterPro"/>
</dbReference>
<dbReference type="HAMAP" id="MF_00415">
    <property type="entry name" value="FlgH"/>
    <property type="match status" value="1"/>
</dbReference>
<dbReference type="InterPro" id="IPR000527">
    <property type="entry name" value="Flag_Lring"/>
</dbReference>
<dbReference type="PANTHER" id="PTHR34933">
    <property type="entry name" value="FLAGELLAR L-RING PROTEIN"/>
    <property type="match status" value="1"/>
</dbReference>
<dbReference type="PANTHER" id="PTHR34933:SF1">
    <property type="entry name" value="FLAGELLAR L-RING PROTEIN"/>
    <property type="match status" value="1"/>
</dbReference>
<dbReference type="Pfam" id="PF02107">
    <property type="entry name" value="FlgH"/>
    <property type="match status" value="1"/>
</dbReference>
<dbReference type="PRINTS" id="PR01008">
    <property type="entry name" value="FLGLRINGFLGH"/>
</dbReference>
<dbReference type="PROSITE" id="PS51257">
    <property type="entry name" value="PROKAR_LIPOPROTEIN"/>
    <property type="match status" value="1"/>
</dbReference>
<gene>
    <name evidence="1" type="primary">flgH</name>
    <name type="ordered locus">A2cp1_2604</name>
</gene>
<name>FLGH_ANAD2</name>
<sequence>MNPLTRVALAVAAFAALVLALSACGPAHVAGHVPKRRDYAVPDAAGQEAQVASAGSTWREGRAASMLYTDARALRENDLVVVRIEEIADAKRSADTDLTRRSELNASIEAFLTSLDTPYALKGGATTGFKGLGSTARTERLTATVPAVVRKVLPNGNLFIEGHRVVLVNAEEQHFYISGVVRPIDIDQENGVKSSMVADAEIEFTGRGVLSDNQRQGWLSRLLGWFWPF</sequence>
<protein>
    <recommendedName>
        <fullName evidence="1">Flagellar L-ring protein</fullName>
    </recommendedName>
    <alternativeName>
        <fullName evidence="1">Basal body L-ring protein</fullName>
    </alternativeName>
</protein>
<organism>
    <name type="scientific">Anaeromyxobacter dehalogenans (strain 2CP-1 / ATCC BAA-258)</name>
    <dbReference type="NCBI Taxonomy" id="455488"/>
    <lineage>
        <taxon>Bacteria</taxon>
        <taxon>Pseudomonadati</taxon>
        <taxon>Myxococcota</taxon>
        <taxon>Myxococcia</taxon>
        <taxon>Myxococcales</taxon>
        <taxon>Cystobacterineae</taxon>
        <taxon>Anaeromyxobacteraceae</taxon>
        <taxon>Anaeromyxobacter</taxon>
    </lineage>
</organism>
<evidence type="ECO:0000255" key="1">
    <source>
        <dbReference type="HAMAP-Rule" id="MF_00415"/>
    </source>
</evidence>